<reference key="1">
    <citation type="journal article" date="2005" name="PLoS Biol.">
        <title>Major structural differences and novel potential virulence mechanisms from the genomes of multiple Campylobacter species.</title>
        <authorList>
            <person name="Fouts D.E."/>
            <person name="Mongodin E.F."/>
            <person name="Mandrell R.E."/>
            <person name="Miller W.G."/>
            <person name="Rasko D.A."/>
            <person name="Ravel J."/>
            <person name="Brinkac L.M."/>
            <person name="DeBoy R.T."/>
            <person name="Parker C.T."/>
            <person name="Daugherty S.C."/>
            <person name="Dodson R.J."/>
            <person name="Durkin A.S."/>
            <person name="Madupu R."/>
            <person name="Sullivan S.A."/>
            <person name="Shetty J.U."/>
            <person name="Ayodeji M.A."/>
            <person name="Shvartsbeyn A."/>
            <person name="Schatz M.C."/>
            <person name="Badger J.H."/>
            <person name="Fraser C.M."/>
            <person name="Nelson K.E."/>
        </authorList>
    </citation>
    <scope>NUCLEOTIDE SEQUENCE [LARGE SCALE GENOMIC DNA]</scope>
    <source>
        <strain>RM1221</strain>
    </source>
</reference>
<comment type="function">
    <text evidence="1">Attaches a formyl group to the free amino group of methionyl-tRNA(fMet). The formyl group appears to play a dual role in the initiator identity of N-formylmethionyl-tRNA by promoting its recognition by IF2 and preventing the misappropriation of this tRNA by the elongation apparatus.</text>
</comment>
<comment type="catalytic activity">
    <reaction evidence="1">
        <text>L-methionyl-tRNA(fMet) + (6R)-10-formyltetrahydrofolate = N-formyl-L-methionyl-tRNA(fMet) + (6S)-5,6,7,8-tetrahydrofolate + H(+)</text>
        <dbReference type="Rhea" id="RHEA:24380"/>
        <dbReference type="Rhea" id="RHEA-COMP:9952"/>
        <dbReference type="Rhea" id="RHEA-COMP:9953"/>
        <dbReference type="ChEBI" id="CHEBI:15378"/>
        <dbReference type="ChEBI" id="CHEBI:57453"/>
        <dbReference type="ChEBI" id="CHEBI:78530"/>
        <dbReference type="ChEBI" id="CHEBI:78844"/>
        <dbReference type="ChEBI" id="CHEBI:195366"/>
        <dbReference type="EC" id="2.1.2.9"/>
    </reaction>
</comment>
<comment type="similarity">
    <text evidence="1">Belongs to the Fmt family.</text>
</comment>
<keyword id="KW-0648">Protein biosynthesis</keyword>
<keyword id="KW-0808">Transferase</keyword>
<proteinExistence type="inferred from homology"/>
<sequence>MKKIIFMGTPSYATCILKALVENENFKLVALFTQPDKAVGRKQILTPSDTKAFLSQNYPSIPIFTPSSLKDKNIIREIKDLNPDFIVVAAYGKILPKAILDLAPCVNLHASLLPKYRGASPIQSAILNKDEKSGVCTMLMEEGLDTGAILESLECDIKDKNSSEVFELLANLAAKLILSTLLNFDKITPKKQEESLATLCRKIKKEDGLINLQNARELYQKYLAFTPWPGVFLENGLKFLELELVDELKQNAKMGEILELEKESFLLACKQGVLRIKKLQESGKKALDGRTYLNGKRLKSEDSLC</sequence>
<feature type="chain" id="PRO_0000082939" description="Methionyl-tRNA formyltransferase">
    <location>
        <begin position="1"/>
        <end position="305"/>
    </location>
</feature>
<feature type="binding site" evidence="1">
    <location>
        <begin position="111"/>
        <end position="114"/>
    </location>
    <ligand>
        <name>(6S)-5,6,7,8-tetrahydrofolate</name>
        <dbReference type="ChEBI" id="CHEBI:57453"/>
    </ligand>
</feature>
<organism>
    <name type="scientific">Campylobacter jejuni (strain RM1221)</name>
    <dbReference type="NCBI Taxonomy" id="195099"/>
    <lineage>
        <taxon>Bacteria</taxon>
        <taxon>Pseudomonadati</taxon>
        <taxon>Campylobacterota</taxon>
        <taxon>Epsilonproteobacteria</taxon>
        <taxon>Campylobacterales</taxon>
        <taxon>Campylobacteraceae</taxon>
        <taxon>Campylobacter</taxon>
    </lineage>
</organism>
<gene>
    <name evidence="1" type="primary">fmt</name>
    <name type="ordered locus">CJE0093</name>
</gene>
<name>FMT_CAMJR</name>
<evidence type="ECO:0000255" key="1">
    <source>
        <dbReference type="HAMAP-Rule" id="MF_00182"/>
    </source>
</evidence>
<protein>
    <recommendedName>
        <fullName evidence="1">Methionyl-tRNA formyltransferase</fullName>
        <ecNumber evidence="1">2.1.2.9</ecNumber>
    </recommendedName>
</protein>
<dbReference type="EC" id="2.1.2.9" evidence="1"/>
<dbReference type="EMBL" id="CP000025">
    <property type="protein sequence ID" value="AAW34688.1"/>
    <property type="molecule type" value="Genomic_DNA"/>
</dbReference>
<dbReference type="RefSeq" id="WP_002859775.1">
    <property type="nucleotide sequence ID" value="NC_003912.7"/>
</dbReference>
<dbReference type="SMR" id="Q5HX68"/>
<dbReference type="KEGG" id="cjr:CJE0093"/>
<dbReference type="HOGENOM" id="CLU_033347_1_1_7"/>
<dbReference type="GO" id="GO:0005829">
    <property type="term" value="C:cytosol"/>
    <property type="evidence" value="ECO:0007669"/>
    <property type="project" value="TreeGrafter"/>
</dbReference>
<dbReference type="GO" id="GO:0004479">
    <property type="term" value="F:methionyl-tRNA formyltransferase activity"/>
    <property type="evidence" value="ECO:0007669"/>
    <property type="project" value="UniProtKB-UniRule"/>
</dbReference>
<dbReference type="CDD" id="cd08646">
    <property type="entry name" value="FMT_core_Met-tRNA-FMT_N"/>
    <property type="match status" value="1"/>
</dbReference>
<dbReference type="CDD" id="cd08704">
    <property type="entry name" value="Met_tRNA_FMT_C"/>
    <property type="match status" value="1"/>
</dbReference>
<dbReference type="Gene3D" id="3.40.50.12230">
    <property type="match status" value="1"/>
</dbReference>
<dbReference type="HAMAP" id="MF_00182">
    <property type="entry name" value="Formyl_trans"/>
    <property type="match status" value="1"/>
</dbReference>
<dbReference type="InterPro" id="IPR005794">
    <property type="entry name" value="Fmt"/>
</dbReference>
<dbReference type="InterPro" id="IPR005793">
    <property type="entry name" value="Formyl_trans_C"/>
</dbReference>
<dbReference type="InterPro" id="IPR002376">
    <property type="entry name" value="Formyl_transf_N"/>
</dbReference>
<dbReference type="InterPro" id="IPR036477">
    <property type="entry name" value="Formyl_transf_N_sf"/>
</dbReference>
<dbReference type="InterPro" id="IPR011034">
    <property type="entry name" value="Formyl_transferase-like_C_sf"/>
</dbReference>
<dbReference type="InterPro" id="IPR001555">
    <property type="entry name" value="GART_AS"/>
</dbReference>
<dbReference type="InterPro" id="IPR044135">
    <property type="entry name" value="Met-tRNA-FMT_C"/>
</dbReference>
<dbReference type="InterPro" id="IPR041711">
    <property type="entry name" value="Met-tRNA-FMT_N"/>
</dbReference>
<dbReference type="NCBIfam" id="TIGR00460">
    <property type="entry name" value="fmt"/>
    <property type="match status" value="1"/>
</dbReference>
<dbReference type="PANTHER" id="PTHR11138">
    <property type="entry name" value="METHIONYL-TRNA FORMYLTRANSFERASE"/>
    <property type="match status" value="1"/>
</dbReference>
<dbReference type="PANTHER" id="PTHR11138:SF5">
    <property type="entry name" value="METHIONYL-TRNA FORMYLTRANSFERASE, MITOCHONDRIAL"/>
    <property type="match status" value="1"/>
</dbReference>
<dbReference type="Pfam" id="PF02911">
    <property type="entry name" value="Formyl_trans_C"/>
    <property type="match status" value="1"/>
</dbReference>
<dbReference type="Pfam" id="PF00551">
    <property type="entry name" value="Formyl_trans_N"/>
    <property type="match status" value="1"/>
</dbReference>
<dbReference type="SUPFAM" id="SSF50486">
    <property type="entry name" value="FMT C-terminal domain-like"/>
    <property type="match status" value="1"/>
</dbReference>
<dbReference type="SUPFAM" id="SSF53328">
    <property type="entry name" value="Formyltransferase"/>
    <property type="match status" value="1"/>
</dbReference>
<dbReference type="PROSITE" id="PS00373">
    <property type="entry name" value="GART"/>
    <property type="match status" value="1"/>
</dbReference>
<accession>Q5HX68</accession>